<organism>
    <name type="scientific">Enterobacter sp. (strain 638)</name>
    <dbReference type="NCBI Taxonomy" id="399742"/>
    <lineage>
        <taxon>Bacteria</taxon>
        <taxon>Pseudomonadati</taxon>
        <taxon>Pseudomonadota</taxon>
        <taxon>Gammaproteobacteria</taxon>
        <taxon>Enterobacterales</taxon>
        <taxon>Enterobacteriaceae</taxon>
        <taxon>Enterobacter</taxon>
    </lineage>
</organism>
<accession>A4W9E4</accession>
<feature type="chain" id="PRO_1000062048" description="High frequency lysogenization protein HflD homolog">
    <location>
        <begin position="1"/>
        <end position="209"/>
    </location>
</feature>
<feature type="coiled-coil region" evidence="1">
    <location>
        <begin position="79"/>
        <end position="121"/>
    </location>
</feature>
<comment type="subcellular location">
    <subcellularLocation>
        <location>Cytoplasm</location>
    </subcellularLocation>
    <subcellularLocation>
        <location evidence="1">Cell inner membrane</location>
        <topology evidence="1">Peripheral membrane protein</topology>
        <orientation evidence="1">Cytoplasmic side</orientation>
    </subcellularLocation>
</comment>
<comment type="similarity">
    <text evidence="1">Belongs to the HflD family.</text>
</comment>
<protein>
    <recommendedName>
        <fullName evidence="1">High frequency lysogenization protein HflD homolog</fullName>
    </recommendedName>
</protein>
<dbReference type="EMBL" id="CP000653">
    <property type="protein sequence ID" value="ABP60324.1"/>
    <property type="molecule type" value="Genomic_DNA"/>
</dbReference>
<dbReference type="RefSeq" id="WP_012017040.1">
    <property type="nucleotide sequence ID" value="NC_009436.1"/>
</dbReference>
<dbReference type="SMR" id="A4W9E4"/>
<dbReference type="STRING" id="399742.Ent638_1645"/>
<dbReference type="KEGG" id="ent:Ent638_1645"/>
<dbReference type="eggNOG" id="COG2915">
    <property type="taxonomic scope" value="Bacteria"/>
</dbReference>
<dbReference type="HOGENOM" id="CLU_098920_0_0_6"/>
<dbReference type="OrthoDB" id="9788031at2"/>
<dbReference type="Proteomes" id="UP000000230">
    <property type="component" value="Chromosome"/>
</dbReference>
<dbReference type="GO" id="GO:0005737">
    <property type="term" value="C:cytoplasm"/>
    <property type="evidence" value="ECO:0007669"/>
    <property type="project" value="UniProtKB-SubCell"/>
</dbReference>
<dbReference type="GO" id="GO:0005886">
    <property type="term" value="C:plasma membrane"/>
    <property type="evidence" value="ECO:0007669"/>
    <property type="project" value="UniProtKB-SubCell"/>
</dbReference>
<dbReference type="FunFam" id="1.10.3890.10:FF:000001">
    <property type="entry name" value="High frequency lysogenization protein HflD homolog"/>
    <property type="match status" value="1"/>
</dbReference>
<dbReference type="Gene3D" id="1.10.3890.10">
    <property type="entry name" value="HflD-like"/>
    <property type="match status" value="1"/>
</dbReference>
<dbReference type="HAMAP" id="MF_00695">
    <property type="entry name" value="HflD_protein"/>
    <property type="match status" value="1"/>
</dbReference>
<dbReference type="InterPro" id="IPR007451">
    <property type="entry name" value="HflD"/>
</dbReference>
<dbReference type="InterPro" id="IPR035932">
    <property type="entry name" value="HflD-like_sf"/>
</dbReference>
<dbReference type="NCBIfam" id="NF001245">
    <property type="entry name" value="PRK00218.1-1"/>
    <property type="match status" value="1"/>
</dbReference>
<dbReference type="NCBIfam" id="NF001246">
    <property type="entry name" value="PRK00218.1-2"/>
    <property type="match status" value="1"/>
</dbReference>
<dbReference type="NCBIfam" id="NF001248">
    <property type="entry name" value="PRK00218.1-4"/>
    <property type="match status" value="1"/>
</dbReference>
<dbReference type="NCBIfam" id="NF001249">
    <property type="entry name" value="PRK00218.1-5"/>
    <property type="match status" value="1"/>
</dbReference>
<dbReference type="PANTHER" id="PTHR38100">
    <property type="entry name" value="HIGH FREQUENCY LYSOGENIZATION PROTEIN HFLD"/>
    <property type="match status" value="1"/>
</dbReference>
<dbReference type="PANTHER" id="PTHR38100:SF1">
    <property type="entry name" value="HIGH FREQUENCY LYSOGENIZATION PROTEIN HFLD"/>
    <property type="match status" value="1"/>
</dbReference>
<dbReference type="Pfam" id="PF04356">
    <property type="entry name" value="DUF489"/>
    <property type="match status" value="1"/>
</dbReference>
<dbReference type="SUPFAM" id="SSF101322">
    <property type="entry name" value="YcfC-like"/>
    <property type="match status" value="1"/>
</dbReference>
<reference key="1">
    <citation type="journal article" date="2010" name="PLoS Genet.">
        <title>Genome sequence of the plant growth promoting endophytic bacterium Enterobacter sp. 638.</title>
        <authorList>
            <person name="Taghavi S."/>
            <person name="van der Lelie D."/>
            <person name="Hoffman A."/>
            <person name="Zhang Y.B."/>
            <person name="Walla M.D."/>
            <person name="Vangronsveld J."/>
            <person name="Newman L."/>
            <person name="Monchy S."/>
        </authorList>
    </citation>
    <scope>NUCLEOTIDE SEQUENCE [LARGE SCALE GENOMIC DNA]</scope>
    <source>
        <strain>638</strain>
    </source>
</reference>
<proteinExistence type="inferred from homology"/>
<evidence type="ECO:0000255" key="1">
    <source>
        <dbReference type="HAMAP-Rule" id="MF_00695"/>
    </source>
</evidence>
<gene>
    <name evidence="1" type="primary">hflD</name>
    <name type="ordered locus">Ent638_1645</name>
</gene>
<name>HFLD_ENT38</name>
<keyword id="KW-0997">Cell inner membrane</keyword>
<keyword id="KW-1003">Cell membrane</keyword>
<keyword id="KW-0175">Coiled coil</keyword>
<keyword id="KW-0963">Cytoplasm</keyword>
<keyword id="KW-0472">Membrane</keyword>
<sequence length="209" mass="22427">MAKNYYDITLALAGICQSARLVQQLAHQGHCDADALHVSLNSVIDLNPGSTLGVFGGSETNLRLGLETLLGVLNASNRQGLNAELTRYTLSLMVLERKLNSAKGAMDTLGDRIAGLQRQLDHFDLQSETLMSAMAAIYVDVISPLGPRIQVTGSPAVLQSSQVQAKVRASLLAGIRAAVLWHQVGGGRLQLMFSRNRLTAQAKQILAHC</sequence>